<accession>Q2V4N5</accession>
<protein>
    <recommendedName>
        <fullName>Putative defensin-like protein 288</fullName>
    </recommendedName>
</protein>
<dbReference type="EMBL" id="AC027134">
    <property type="status" value="NOT_ANNOTATED_CDS"/>
    <property type="molecule type" value="Genomic_DNA"/>
</dbReference>
<dbReference type="EMBL" id="AC027656">
    <property type="status" value="NOT_ANNOTATED_CDS"/>
    <property type="molecule type" value="Genomic_DNA"/>
</dbReference>
<dbReference type="EMBL" id="CP002684">
    <property type="protein sequence ID" value="AEE29043.1"/>
    <property type="molecule type" value="Genomic_DNA"/>
</dbReference>
<dbReference type="RefSeq" id="NP_001031040.1">
    <property type="nucleotide sequence ID" value="NM_001035963.2"/>
</dbReference>
<dbReference type="STRING" id="3702.Q2V4N5"/>
<dbReference type="iPTMnet" id="Q2V4N5"/>
<dbReference type="PaxDb" id="3702-AT1G13608.1"/>
<dbReference type="EnsemblPlants" id="AT1G13608.1">
    <property type="protein sequence ID" value="AT1G13608.1"/>
    <property type="gene ID" value="AT1G13608"/>
</dbReference>
<dbReference type="GeneID" id="3766720"/>
<dbReference type="Gramene" id="AT1G13608.1">
    <property type="protein sequence ID" value="AT1G13608.1"/>
    <property type="gene ID" value="AT1G13608"/>
</dbReference>
<dbReference type="KEGG" id="ath:AT1G13608"/>
<dbReference type="Araport" id="AT1G13608"/>
<dbReference type="TAIR" id="AT1G13608"/>
<dbReference type="HOGENOM" id="CLU_2625318_0_0_1"/>
<dbReference type="InParanoid" id="Q2V4N5"/>
<dbReference type="OrthoDB" id="1021042at2759"/>
<dbReference type="PhylomeDB" id="Q2V4N5"/>
<dbReference type="Proteomes" id="UP000006548">
    <property type="component" value="Chromosome 1"/>
</dbReference>
<dbReference type="ExpressionAtlas" id="Q2V4N5">
    <property type="expression patterns" value="baseline and differential"/>
</dbReference>
<dbReference type="GO" id="GO:0005576">
    <property type="term" value="C:extracellular region"/>
    <property type="evidence" value="ECO:0007669"/>
    <property type="project" value="UniProtKB-SubCell"/>
</dbReference>
<dbReference type="GO" id="GO:0050832">
    <property type="term" value="P:defense response to fungus"/>
    <property type="evidence" value="ECO:0007669"/>
    <property type="project" value="UniProtKB-KW"/>
</dbReference>
<dbReference type="GO" id="GO:0031640">
    <property type="term" value="P:killing of cells of another organism"/>
    <property type="evidence" value="ECO:0007669"/>
    <property type="project" value="UniProtKB-KW"/>
</dbReference>
<name>DF288_ARATH</name>
<feature type="signal peptide" evidence="2">
    <location>
        <begin position="1"/>
        <end position="21"/>
    </location>
</feature>
<feature type="chain" id="PRO_0000379748" description="Putative defensin-like protein 288">
    <location>
        <begin position="22"/>
        <end position="78"/>
    </location>
</feature>
<comment type="subcellular location">
    <subcellularLocation>
        <location evidence="1">Secreted</location>
    </subcellularLocation>
</comment>
<comment type="similarity">
    <text evidence="3">Belongs to the DEFL family.</text>
</comment>
<comment type="caution">
    <text evidence="3">Could be the product of a pseudogene. Lacks the 4 disulfide bonds, which are conserved features of the family.</text>
</comment>
<keyword id="KW-0929">Antimicrobial</keyword>
<keyword id="KW-0295">Fungicide</keyword>
<keyword id="KW-0611">Plant defense</keyword>
<keyword id="KW-1185">Reference proteome</keyword>
<keyword id="KW-0964">Secreted</keyword>
<keyword id="KW-0732">Signal</keyword>
<organism>
    <name type="scientific">Arabidopsis thaliana</name>
    <name type="common">Mouse-ear cress</name>
    <dbReference type="NCBI Taxonomy" id="3702"/>
    <lineage>
        <taxon>Eukaryota</taxon>
        <taxon>Viridiplantae</taxon>
        <taxon>Streptophyta</taxon>
        <taxon>Embryophyta</taxon>
        <taxon>Tracheophyta</taxon>
        <taxon>Spermatophyta</taxon>
        <taxon>Magnoliopsida</taxon>
        <taxon>eudicotyledons</taxon>
        <taxon>Gunneridae</taxon>
        <taxon>Pentapetalae</taxon>
        <taxon>rosids</taxon>
        <taxon>malvids</taxon>
        <taxon>Brassicales</taxon>
        <taxon>Brassicaceae</taxon>
        <taxon>Camelineae</taxon>
        <taxon>Arabidopsis</taxon>
    </lineage>
</organism>
<proteinExistence type="uncertain"/>
<evidence type="ECO:0000250" key="1"/>
<evidence type="ECO:0000255" key="2"/>
<evidence type="ECO:0000305" key="3"/>
<sequence>MSNLRLTIAVFLAALFQTLWWKPRGKRPQSNFHAKRIRTVLQTLLVMLCTDYRCDKGLCKCHGFGGEKENPTAAPLTA</sequence>
<reference key="1">
    <citation type="journal article" date="2000" name="Nature">
        <title>Sequence and analysis of chromosome 1 of the plant Arabidopsis thaliana.</title>
        <authorList>
            <person name="Theologis A."/>
            <person name="Ecker J.R."/>
            <person name="Palm C.J."/>
            <person name="Federspiel N.A."/>
            <person name="Kaul S."/>
            <person name="White O."/>
            <person name="Alonso J."/>
            <person name="Altafi H."/>
            <person name="Araujo R."/>
            <person name="Bowman C.L."/>
            <person name="Brooks S.Y."/>
            <person name="Buehler E."/>
            <person name="Chan A."/>
            <person name="Chao Q."/>
            <person name="Chen H."/>
            <person name="Cheuk R.F."/>
            <person name="Chin C.W."/>
            <person name="Chung M.K."/>
            <person name="Conn L."/>
            <person name="Conway A.B."/>
            <person name="Conway A.R."/>
            <person name="Creasy T.H."/>
            <person name="Dewar K."/>
            <person name="Dunn P."/>
            <person name="Etgu P."/>
            <person name="Feldblyum T.V."/>
            <person name="Feng J.-D."/>
            <person name="Fong B."/>
            <person name="Fujii C.Y."/>
            <person name="Gill J.E."/>
            <person name="Goldsmith A.D."/>
            <person name="Haas B."/>
            <person name="Hansen N.F."/>
            <person name="Hughes B."/>
            <person name="Huizar L."/>
            <person name="Hunter J.L."/>
            <person name="Jenkins J."/>
            <person name="Johnson-Hopson C."/>
            <person name="Khan S."/>
            <person name="Khaykin E."/>
            <person name="Kim C.J."/>
            <person name="Koo H.L."/>
            <person name="Kremenetskaia I."/>
            <person name="Kurtz D.B."/>
            <person name="Kwan A."/>
            <person name="Lam B."/>
            <person name="Langin-Hooper S."/>
            <person name="Lee A."/>
            <person name="Lee J.M."/>
            <person name="Lenz C.A."/>
            <person name="Li J.H."/>
            <person name="Li Y.-P."/>
            <person name="Lin X."/>
            <person name="Liu S.X."/>
            <person name="Liu Z.A."/>
            <person name="Luros J.S."/>
            <person name="Maiti R."/>
            <person name="Marziali A."/>
            <person name="Militscher J."/>
            <person name="Miranda M."/>
            <person name="Nguyen M."/>
            <person name="Nierman W.C."/>
            <person name="Osborne B.I."/>
            <person name="Pai G."/>
            <person name="Peterson J."/>
            <person name="Pham P.K."/>
            <person name="Rizzo M."/>
            <person name="Rooney T."/>
            <person name="Rowley D."/>
            <person name="Sakano H."/>
            <person name="Salzberg S.L."/>
            <person name="Schwartz J.R."/>
            <person name="Shinn P."/>
            <person name="Southwick A.M."/>
            <person name="Sun H."/>
            <person name="Tallon L.J."/>
            <person name="Tambunga G."/>
            <person name="Toriumi M.J."/>
            <person name="Town C.D."/>
            <person name="Utterback T."/>
            <person name="Van Aken S."/>
            <person name="Vaysberg M."/>
            <person name="Vysotskaia V.S."/>
            <person name="Walker M."/>
            <person name="Wu D."/>
            <person name="Yu G."/>
            <person name="Fraser C.M."/>
            <person name="Venter J.C."/>
            <person name="Davis R.W."/>
        </authorList>
    </citation>
    <scope>NUCLEOTIDE SEQUENCE [LARGE SCALE GENOMIC DNA]</scope>
    <source>
        <strain>cv. Columbia</strain>
    </source>
</reference>
<reference key="2">
    <citation type="journal article" date="2017" name="Plant J.">
        <title>Araport11: a complete reannotation of the Arabidopsis thaliana reference genome.</title>
        <authorList>
            <person name="Cheng C.Y."/>
            <person name="Krishnakumar V."/>
            <person name="Chan A.P."/>
            <person name="Thibaud-Nissen F."/>
            <person name="Schobel S."/>
            <person name="Town C.D."/>
        </authorList>
    </citation>
    <scope>GENOME REANNOTATION</scope>
    <source>
        <strain>cv. Columbia</strain>
    </source>
</reference>
<reference key="3">
    <citation type="journal article" date="2005" name="Plant Physiol.">
        <title>Genome organization of more than 300 defensin-like genes in Arabidopsis.</title>
        <authorList>
            <person name="Silverstein K.A.T."/>
            <person name="Graham M.A."/>
            <person name="Paape T.D."/>
            <person name="VandenBosch K.A."/>
        </authorList>
    </citation>
    <scope>GENE FAMILY</scope>
</reference>
<gene>
    <name type="ordered locus">At1g13608</name>
    <name type="ORF">F13B4</name>
    <name type="ORF">F21F23</name>
</gene>